<feature type="chain" id="PRO_0000210919" description="Nucleoid-associated protein SO_2177">
    <location>
        <begin position="1"/>
        <end position="342"/>
    </location>
</feature>
<gene>
    <name type="ordered locus">SO_2177</name>
</gene>
<organism>
    <name type="scientific">Shewanella oneidensis (strain ATCC 700550 / JCM 31522 / CIP 106686 / LMG 19005 / NCIMB 14063 / MR-1)</name>
    <dbReference type="NCBI Taxonomy" id="211586"/>
    <lineage>
        <taxon>Bacteria</taxon>
        <taxon>Pseudomonadati</taxon>
        <taxon>Pseudomonadota</taxon>
        <taxon>Gammaproteobacteria</taxon>
        <taxon>Alteromonadales</taxon>
        <taxon>Shewanellaceae</taxon>
        <taxon>Shewanella</taxon>
    </lineage>
</organism>
<proteinExistence type="inferred from homology"/>
<sequence length="342" mass="38149">MSINIEQAIIHEISQDSQGQLRCRLRPQPLLNGQAVEMMLEELHQTYTSKSGKGFGYFGIHGDDGEANPAFANALKEYRAGDLGFVEFTGQASKLLQEELAKYDFSQGGFLLMSCYTSMASDYLFVALLSAKSSMTVLDDMELSQNNHLDLNNIQLAARIDLTELQADKDSRKYISFIRGRAGRKVADFFLDFMGCVEGVNTKAQNKTLMNAVEDFVASSDLTKEERQQCRNKVFEYCSERFDEGADIEIKDLADELADQGMESFYDFARGGSYELDEEFPADKSTLRQLKKFSGTGGGVTISFDGGHLGQRVIYDPISDTILIKGVPANLKDQLDRRLKGE</sequence>
<reference key="1">
    <citation type="journal article" date="2002" name="Nat. Biotechnol.">
        <title>Genome sequence of the dissimilatory metal ion-reducing bacterium Shewanella oneidensis.</title>
        <authorList>
            <person name="Heidelberg J.F."/>
            <person name="Paulsen I.T."/>
            <person name="Nelson K.E."/>
            <person name="Gaidos E.J."/>
            <person name="Nelson W.C."/>
            <person name="Read T.D."/>
            <person name="Eisen J.A."/>
            <person name="Seshadri R."/>
            <person name="Ward N.L."/>
            <person name="Methe B.A."/>
            <person name="Clayton R.A."/>
            <person name="Meyer T."/>
            <person name="Tsapin A."/>
            <person name="Scott J."/>
            <person name="Beanan M.J."/>
            <person name="Brinkac L.M."/>
            <person name="Daugherty S.C."/>
            <person name="DeBoy R.T."/>
            <person name="Dodson R.J."/>
            <person name="Durkin A.S."/>
            <person name="Haft D.H."/>
            <person name="Kolonay J.F."/>
            <person name="Madupu R."/>
            <person name="Peterson J.D."/>
            <person name="Umayam L.A."/>
            <person name="White O."/>
            <person name="Wolf A.M."/>
            <person name="Vamathevan J.J."/>
            <person name="Weidman J.F."/>
            <person name="Impraim M."/>
            <person name="Lee K."/>
            <person name="Berry K.J."/>
            <person name="Lee C."/>
            <person name="Mueller J."/>
            <person name="Khouri H.M."/>
            <person name="Gill J."/>
            <person name="Utterback T.R."/>
            <person name="McDonald L.A."/>
            <person name="Feldblyum T.V."/>
            <person name="Smith H.O."/>
            <person name="Venter J.C."/>
            <person name="Nealson K.H."/>
            <person name="Fraser C.M."/>
        </authorList>
    </citation>
    <scope>NUCLEOTIDE SEQUENCE [LARGE SCALE GENOMIC DNA]</scope>
    <source>
        <strain>ATCC 700550 / JCM 31522 / CIP 106686 / LMG 19005 / NCIMB 14063 / MR-1</strain>
    </source>
</reference>
<evidence type="ECO:0000255" key="1">
    <source>
        <dbReference type="HAMAP-Rule" id="MF_00730"/>
    </source>
</evidence>
<accession>Q8EF25</accession>
<name>NDPA_SHEON</name>
<dbReference type="EMBL" id="AE014299">
    <property type="protein sequence ID" value="AAN55221.1"/>
    <property type="molecule type" value="Genomic_DNA"/>
</dbReference>
<dbReference type="RefSeq" id="NP_717777.1">
    <property type="nucleotide sequence ID" value="NC_004347.2"/>
</dbReference>
<dbReference type="RefSeq" id="WP_011072213.1">
    <property type="nucleotide sequence ID" value="NC_004347.2"/>
</dbReference>
<dbReference type="SMR" id="Q8EF25"/>
<dbReference type="STRING" id="211586.SO_2177"/>
<dbReference type="PaxDb" id="211586-SO_2177"/>
<dbReference type="KEGG" id="son:SO_2177"/>
<dbReference type="PATRIC" id="fig|211586.12.peg.2093"/>
<dbReference type="eggNOG" id="COG3081">
    <property type="taxonomic scope" value="Bacteria"/>
</dbReference>
<dbReference type="HOGENOM" id="CLU_063050_0_1_6"/>
<dbReference type="OrthoDB" id="9131762at2"/>
<dbReference type="PhylomeDB" id="Q8EF25"/>
<dbReference type="BioCyc" id="SONE211586:G1GMP-1995-MONOMER"/>
<dbReference type="Proteomes" id="UP000008186">
    <property type="component" value="Chromosome"/>
</dbReference>
<dbReference type="GO" id="GO:0043590">
    <property type="term" value="C:bacterial nucleoid"/>
    <property type="evidence" value="ECO:0000318"/>
    <property type="project" value="GO_Central"/>
</dbReference>
<dbReference type="GO" id="GO:0005737">
    <property type="term" value="C:cytoplasm"/>
    <property type="evidence" value="ECO:0007669"/>
    <property type="project" value="UniProtKB-UniRule"/>
</dbReference>
<dbReference type="GO" id="GO:0003690">
    <property type="term" value="F:double-stranded DNA binding"/>
    <property type="evidence" value="ECO:0000318"/>
    <property type="project" value="GO_Central"/>
</dbReference>
<dbReference type="GO" id="GO:0003727">
    <property type="term" value="F:single-stranded RNA binding"/>
    <property type="evidence" value="ECO:0000318"/>
    <property type="project" value="GO_Central"/>
</dbReference>
<dbReference type="HAMAP" id="MF_00730">
    <property type="entry name" value="NdpA"/>
    <property type="match status" value="1"/>
</dbReference>
<dbReference type="InterPro" id="IPR007358">
    <property type="entry name" value="Nucleoid_associated_NdpA"/>
</dbReference>
<dbReference type="NCBIfam" id="NF001557">
    <property type="entry name" value="PRK00378.1"/>
    <property type="match status" value="1"/>
</dbReference>
<dbReference type="PANTHER" id="PTHR38772">
    <property type="match status" value="1"/>
</dbReference>
<dbReference type="PANTHER" id="PTHR38772:SF1">
    <property type="entry name" value="NUCLEOID-ASSOCIATED PROTEIN YEJK"/>
    <property type="match status" value="1"/>
</dbReference>
<dbReference type="Pfam" id="PF04245">
    <property type="entry name" value="NA37"/>
    <property type="match status" value="1"/>
</dbReference>
<comment type="subcellular location">
    <subcellularLocation>
        <location evidence="1">Cytoplasm</location>
        <location evidence="1">Nucleoid</location>
    </subcellularLocation>
</comment>
<comment type="similarity">
    <text evidence="1">Belongs to the YejK family.</text>
</comment>
<keyword id="KW-0963">Cytoplasm</keyword>
<keyword id="KW-1185">Reference proteome</keyword>
<protein>
    <recommendedName>
        <fullName evidence="1">Nucleoid-associated protein SO_2177</fullName>
    </recommendedName>
</protein>